<comment type="catalytic activity">
    <reaction evidence="1">
        <text>GTP + H2O = 7,8-dihydroneopterin 3'-triphosphate + formate + H(+)</text>
        <dbReference type="Rhea" id="RHEA:17473"/>
        <dbReference type="ChEBI" id="CHEBI:15377"/>
        <dbReference type="ChEBI" id="CHEBI:15378"/>
        <dbReference type="ChEBI" id="CHEBI:15740"/>
        <dbReference type="ChEBI" id="CHEBI:37565"/>
        <dbReference type="ChEBI" id="CHEBI:58462"/>
        <dbReference type="EC" id="3.5.4.16"/>
    </reaction>
</comment>
<comment type="pathway">
    <text evidence="1">Cofactor biosynthesis; 7,8-dihydroneopterin triphosphate biosynthesis; 7,8-dihydroneopterin triphosphate from GTP: step 1/1.</text>
</comment>
<comment type="subunit">
    <text evidence="1">Homomer.</text>
</comment>
<comment type="similarity">
    <text evidence="1">Belongs to the GTP cyclohydrolase I family.</text>
</comment>
<protein>
    <recommendedName>
        <fullName evidence="1">GTP cyclohydrolase 1</fullName>
        <ecNumber evidence="1">3.5.4.16</ecNumber>
    </recommendedName>
    <alternativeName>
        <fullName evidence="1">GTP cyclohydrolase I</fullName>
        <shortName evidence="1">GTP-CH-I</shortName>
    </alternativeName>
</protein>
<reference key="1">
    <citation type="submission" date="2005-09" db="EMBL/GenBank/DDBJ databases">
        <title>Complete genome sequence of Clostridium kluyveri and comparative genomics of Clostridia species.</title>
        <authorList>
            <person name="Inui M."/>
            <person name="Nonaka H."/>
            <person name="Shinoda Y."/>
            <person name="Ikenaga Y."/>
            <person name="Abe M."/>
            <person name="Naito K."/>
            <person name="Vertes A.A."/>
            <person name="Yukawa H."/>
        </authorList>
    </citation>
    <scope>NUCLEOTIDE SEQUENCE [LARGE SCALE GENOMIC DNA]</scope>
    <source>
        <strain>NBRC 12016</strain>
    </source>
</reference>
<sequence length="185" mass="21406">MDENKIKDAVRMIIEAIGENPEREGLAETPDRIARMYTEIFSGLKEKPEEHLKKVFTVNNDDIVLEKDIQFYSMCEHHFMPFYGKTHVAYIPNGKVVGLSKLARTVEVFAKRLQLQERMTVQIADSIMDYLKVKGVMVVIEAEHMCMTMRGIKKPGSKTVTVATRGIFKNKIEFRNQVYEMIKMK</sequence>
<evidence type="ECO:0000255" key="1">
    <source>
        <dbReference type="HAMAP-Rule" id="MF_00223"/>
    </source>
</evidence>
<feature type="chain" id="PRO_1000124915" description="GTP cyclohydrolase 1">
    <location>
        <begin position="1"/>
        <end position="185"/>
    </location>
</feature>
<feature type="binding site" evidence="1">
    <location>
        <position position="75"/>
    </location>
    <ligand>
        <name>Zn(2+)</name>
        <dbReference type="ChEBI" id="CHEBI:29105"/>
    </ligand>
</feature>
<feature type="binding site" evidence="1">
    <location>
        <position position="78"/>
    </location>
    <ligand>
        <name>Zn(2+)</name>
        <dbReference type="ChEBI" id="CHEBI:29105"/>
    </ligand>
</feature>
<feature type="binding site" evidence="1">
    <location>
        <position position="146"/>
    </location>
    <ligand>
        <name>Zn(2+)</name>
        <dbReference type="ChEBI" id="CHEBI:29105"/>
    </ligand>
</feature>
<gene>
    <name evidence="1" type="primary">folE</name>
    <name type="ordered locus">CKR_0866</name>
</gene>
<name>GCH1_CLOK1</name>
<dbReference type="EC" id="3.5.4.16" evidence="1"/>
<dbReference type="EMBL" id="AP009049">
    <property type="protein sequence ID" value="BAH05917.1"/>
    <property type="molecule type" value="Genomic_DNA"/>
</dbReference>
<dbReference type="RefSeq" id="WP_012101333.1">
    <property type="nucleotide sequence ID" value="NC_011837.1"/>
</dbReference>
<dbReference type="SMR" id="B9E092"/>
<dbReference type="KEGG" id="ckr:CKR_0866"/>
<dbReference type="HOGENOM" id="CLU_049768_3_3_9"/>
<dbReference type="UniPathway" id="UPA00848">
    <property type="reaction ID" value="UER00151"/>
</dbReference>
<dbReference type="Proteomes" id="UP000007969">
    <property type="component" value="Chromosome"/>
</dbReference>
<dbReference type="GO" id="GO:0005737">
    <property type="term" value="C:cytoplasm"/>
    <property type="evidence" value="ECO:0007669"/>
    <property type="project" value="TreeGrafter"/>
</dbReference>
<dbReference type="GO" id="GO:0005525">
    <property type="term" value="F:GTP binding"/>
    <property type="evidence" value="ECO:0007669"/>
    <property type="project" value="UniProtKB-KW"/>
</dbReference>
<dbReference type="GO" id="GO:0003934">
    <property type="term" value="F:GTP cyclohydrolase I activity"/>
    <property type="evidence" value="ECO:0007669"/>
    <property type="project" value="UniProtKB-UniRule"/>
</dbReference>
<dbReference type="GO" id="GO:0008270">
    <property type="term" value="F:zinc ion binding"/>
    <property type="evidence" value="ECO:0007669"/>
    <property type="project" value="UniProtKB-UniRule"/>
</dbReference>
<dbReference type="GO" id="GO:0006730">
    <property type="term" value="P:one-carbon metabolic process"/>
    <property type="evidence" value="ECO:0007669"/>
    <property type="project" value="UniProtKB-UniRule"/>
</dbReference>
<dbReference type="GO" id="GO:0006729">
    <property type="term" value="P:tetrahydrobiopterin biosynthetic process"/>
    <property type="evidence" value="ECO:0007669"/>
    <property type="project" value="TreeGrafter"/>
</dbReference>
<dbReference type="GO" id="GO:0046654">
    <property type="term" value="P:tetrahydrofolate biosynthetic process"/>
    <property type="evidence" value="ECO:0007669"/>
    <property type="project" value="UniProtKB-UniRule"/>
</dbReference>
<dbReference type="FunFam" id="1.10.286.10:FF:000001">
    <property type="entry name" value="GTP cyclohydrolase 1"/>
    <property type="match status" value="1"/>
</dbReference>
<dbReference type="FunFam" id="3.30.1130.10:FF:000001">
    <property type="entry name" value="GTP cyclohydrolase 1"/>
    <property type="match status" value="1"/>
</dbReference>
<dbReference type="Gene3D" id="1.10.286.10">
    <property type="match status" value="1"/>
</dbReference>
<dbReference type="Gene3D" id="3.30.1130.10">
    <property type="match status" value="1"/>
</dbReference>
<dbReference type="HAMAP" id="MF_00223">
    <property type="entry name" value="FolE"/>
    <property type="match status" value="1"/>
</dbReference>
<dbReference type="InterPro" id="IPR043133">
    <property type="entry name" value="GTP-CH-I_C/QueF"/>
</dbReference>
<dbReference type="InterPro" id="IPR043134">
    <property type="entry name" value="GTP-CH-I_N"/>
</dbReference>
<dbReference type="InterPro" id="IPR001474">
    <property type="entry name" value="GTP_CycHdrlase_I"/>
</dbReference>
<dbReference type="InterPro" id="IPR018234">
    <property type="entry name" value="GTP_CycHdrlase_I_CS"/>
</dbReference>
<dbReference type="InterPro" id="IPR020602">
    <property type="entry name" value="GTP_CycHdrlase_I_dom"/>
</dbReference>
<dbReference type="NCBIfam" id="TIGR00063">
    <property type="entry name" value="folE"/>
    <property type="match status" value="1"/>
</dbReference>
<dbReference type="NCBIfam" id="NF006825">
    <property type="entry name" value="PRK09347.1-2"/>
    <property type="match status" value="1"/>
</dbReference>
<dbReference type="NCBIfam" id="NF006826">
    <property type="entry name" value="PRK09347.1-3"/>
    <property type="match status" value="1"/>
</dbReference>
<dbReference type="PANTHER" id="PTHR11109:SF7">
    <property type="entry name" value="GTP CYCLOHYDROLASE 1"/>
    <property type="match status" value="1"/>
</dbReference>
<dbReference type="PANTHER" id="PTHR11109">
    <property type="entry name" value="GTP CYCLOHYDROLASE I"/>
    <property type="match status" value="1"/>
</dbReference>
<dbReference type="Pfam" id="PF01227">
    <property type="entry name" value="GTP_cyclohydroI"/>
    <property type="match status" value="1"/>
</dbReference>
<dbReference type="SUPFAM" id="SSF55620">
    <property type="entry name" value="Tetrahydrobiopterin biosynthesis enzymes-like"/>
    <property type="match status" value="1"/>
</dbReference>
<dbReference type="PROSITE" id="PS00859">
    <property type="entry name" value="GTP_CYCLOHYDROL_1_1"/>
    <property type="match status" value="1"/>
</dbReference>
<dbReference type="PROSITE" id="PS00860">
    <property type="entry name" value="GTP_CYCLOHYDROL_1_2"/>
    <property type="match status" value="1"/>
</dbReference>
<keyword id="KW-0342">GTP-binding</keyword>
<keyword id="KW-0378">Hydrolase</keyword>
<keyword id="KW-0479">Metal-binding</keyword>
<keyword id="KW-0547">Nucleotide-binding</keyword>
<keyword id="KW-0554">One-carbon metabolism</keyword>
<keyword id="KW-0862">Zinc</keyword>
<proteinExistence type="inferred from homology"/>
<accession>B9E092</accession>
<organism>
    <name type="scientific">Clostridium kluyveri (strain NBRC 12016)</name>
    <dbReference type="NCBI Taxonomy" id="583346"/>
    <lineage>
        <taxon>Bacteria</taxon>
        <taxon>Bacillati</taxon>
        <taxon>Bacillota</taxon>
        <taxon>Clostridia</taxon>
        <taxon>Eubacteriales</taxon>
        <taxon>Clostridiaceae</taxon>
        <taxon>Clostridium</taxon>
    </lineage>
</organism>